<sequence length="405" mass="46027">MSKKVNKNASPKNNSDSESKTIIYRPNTIDCDRIDIADWNKDGKQWNAWLNYQDPNLNSNTKILLQTKTIELKHHGIPRIGEGEDAFIKSDADREYIKIPLTPGEPGCEELEQQFQALDEYFSSDEMRTKLFGKRANGYKYVTCVKTPKIKDESDSDSDDEDTKKKKKNTKNKGKQEGPPVKYIKAKFHMIQDNGKKINRTKLIKSSGGKKEEVNADTVTEIANEVRFLSKTKYIMHVNRIWAAKSVLLGADKKMYSLGVKVMAIEYTPGASTGLNSKNLAFMSDDEDEEEVVKPTKSPNKSSQKQKQKLDSDDEDSDNEKEKEKEEDDEEEHKSSNKSSNKKSKKQDDDEDDEEEGEKIEVKKSSKKSSKKASKKQDSDEEDEEEVAKPKKKSSKAKSPSKSRS</sequence>
<organismHost>
    <name type="scientific">Acanthamoeba polyphaga</name>
    <name type="common">Amoeba</name>
    <dbReference type="NCBI Taxonomy" id="5757"/>
</organismHost>
<reference key="1">
    <citation type="journal article" date="2004" name="Science">
        <title>The 1.2-megabase genome sequence of Mimivirus.</title>
        <authorList>
            <person name="Raoult D."/>
            <person name="Audic S."/>
            <person name="Robert C."/>
            <person name="Abergel C."/>
            <person name="Renesto P."/>
            <person name="Ogata H."/>
            <person name="La Scola B."/>
            <person name="Susan M."/>
            <person name="Claverie J.-M."/>
        </authorList>
    </citation>
    <scope>NUCLEOTIDE SEQUENCE [LARGE SCALE GENOMIC DNA]</scope>
    <source>
        <strain>Rowbotham-Bradford</strain>
    </source>
</reference>
<name>YR505_MIMIV</name>
<keyword id="KW-1185">Reference proteome</keyword>
<organism>
    <name type="scientific">Acanthamoeba polyphaga mimivirus</name>
    <name type="common">APMV</name>
    <dbReference type="NCBI Taxonomy" id="212035"/>
    <lineage>
        <taxon>Viruses</taxon>
        <taxon>Varidnaviria</taxon>
        <taxon>Bamfordvirae</taxon>
        <taxon>Nucleocytoviricota</taxon>
        <taxon>Megaviricetes</taxon>
        <taxon>Imitervirales</taxon>
        <taxon>Mimiviridae</taxon>
        <taxon>Megamimivirinae</taxon>
        <taxon>Mimivirus</taxon>
        <taxon>Mimivirus bradfordmassiliense</taxon>
    </lineage>
</organism>
<evidence type="ECO:0000256" key="1">
    <source>
        <dbReference type="SAM" id="MobiDB-lite"/>
    </source>
</evidence>
<protein>
    <recommendedName>
        <fullName>Uncharacterized protein R505</fullName>
    </recommendedName>
</protein>
<accession>Q5UQ68</accession>
<gene>
    <name type="ordered locus">MIMI_R505</name>
</gene>
<dbReference type="EMBL" id="AY653733">
    <property type="protein sequence ID" value="AAV50769.1"/>
    <property type="molecule type" value="Genomic_DNA"/>
</dbReference>
<dbReference type="Proteomes" id="UP000001134">
    <property type="component" value="Genome"/>
</dbReference>
<feature type="chain" id="PRO_0000253458" description="Uncharacterized protein R505">
    <location>
        <begin position="1"/>
        <end position="405"/>
    </location>
</feature>
<feature type="region of interest" description="Disordered" evidence="1">
    <location>
        <begin position="1"/>
        <end position="21"/>
    </location>
</feature>
<feature type="region of interest" description="Disordered" evidence="1">
    <location>
        <begin position="150"/>
        <end position="179"/>
    </location>
</feature>
<feature type="region of interest" description="Disordered" evidence="1">
    <location>
        <begin position="285"/>
        <end position="405"/>
    </location>
</feature>
<feature type="compositionally biased region" description="Polar residues" evidence="1">
    <location>
        <begin position="7"/>
        <end position="16"/>
    </location>
</feature>
<feature type="compositionally biased region" description="Acidic residues" evidence="1">
    <location>
        <begin position="312"/>
        <end position="331"/>
    </location>
</feature>
<feature type="compositionally biased region" description="Acidic residues" evidence="1">
    <location>
        <begin position="349"/>
        <end position="358"/>
    </location>
</feature>
<feature type="compositionally biased region" description="Basic residues" evidence="1">
    <location>
        <begin position="365"/>
        <end position="374"/>
    </location>
</feature>
<feature type="compositionally biased region" description="Basic residues" evidence="1">
    <location>
        <begin position="390"/>
        <end position="405"/>
    </location>
</feature>
<proteinExistence type="predicted"/>